<feature type="chain" id="PRO_0000171574" description="Ribulose-phosphate 3-epimerase">
    <location>
        <begin position="1"/>
        <end position="229"/>
    </location>
</feature>
<feature type="active site" description="Proton acceptor" evidence="1">
    <location>
        <position position="38"/>
    </location>
</feature>
<feature type="active site" description="Proton donor" evidence="1">
    <location>
        <position position="178"/>
    </location>
</feature>
<feature type="binding site" evidence="1">
    <location>
        <position position="13"/>
    </location>
    <ligand>
        <name>substrate</name>
    </ligand>
</feature>
<feature type="binding site" evidence="1">
    <location>
        <position position="36"/>
    </location>
    <ligand>
        <name>a divalent metal cation</name>
        <dbReference type="ChEBI" id="CHEBI:60240"/>
    </ligand>
</feature>
<feature type="binding site" evidence="1">
    <location>
        <position position="38"/>
    </location>
    <ligand>
        <name>a divalent metal cation</name>
        <dbReference type="ChEBI" id="CHEBI:60240"/>
    </ligand>
</feature>
<feature type="binding site" evidence="1">
    <location>
        <position position="69"/>
    </location>
    <ligand>
        <name>a divalent metal cation</name>
        <dbReference type="ChEBI" id="CHEBI:60240"/>
    </ligand>
</feature>
<feature type="binding site" evidence="1">
    <location>
        <position position="69"/>
    </location>
    <ligand>
        <name>substrate</name>
    </ligand>
</feature>
<feature type="binding site" evidence="1">
    <location>
        <begin position="145"/>
        <end position="148"/>
    </location>
    <ligand>
        <name>substrate</name>
    </ligand>
</feature>
<feature type="binding site" evidence="1">
    <location>
        <begin position="178"/>
        <end position="180"/>
    </location>
    <ligand>
        <name>substrate</name>
    </ligand>
</feature>
<feature type="binding site" evidence="1">
    <location>
        <position position="178"/>
    </location>
    <ligand>
        <name>a divalent metal cation</name>
        <dbReference type="ChEBI" id="CHEBI:60240"/>
    </ligand>
</feature>
<feature type="binding site" evidence="1">
    <location>
        <begin position="200"/>
        <end position="201"/>
    </location>
    <ligand>
        <name>substrate</name>
    </ligand>
</feature>
<organism>
    <name type="scientific">Mycobacterium bovis (strain ATCC BAA-935 / AF2122/97)</name>
    <dbReference type="NCBI Taxonomy" id="233413"/>
    <lineage>
        <taxon>Bacteria</taxon>
        <taxon>Bacillati</taxon>
        <taxon>Actinomycetota</taxon>
        <taxon>Actinomycetes</taxon>
        <taxon>Mycobacteriales</taxon>
        <taxon>Mycobacteriaceae</taxon>
        <taxon>Mycobacterium</taxon>
        <taxon>Mycobacterium tuberculosis complex</taxon>
    </lineage>
</organism>
<gene>
    <name evidence="1" type="primary">rpe</name>
    <name type="ordered locus">BQ2027_MB1443</name>
</gene>
<name>RPE_MYCBO</name>
<reference key="1">
    <citation type="journal article" date="2003" name="Proc. Natl. Acad. Sci. U.S.A.">
        <title>The complete genome sequence of Mycobacterium bovis.</title>
        <authorList>
            <person name="Garnier T."/>
            <person name="Eiglmeier K."/>
            <person name="Camus J.-C."/>
            <person name="Medina N."/>
            <person name="Mansoor H."/>
            <person name="Pryor M."/>
            <person name="Duthoy S."/>
            <person name="Grondin S."/>
            <person name="Lacroix C."/>
            <person name="Monsempe C."/>
            <person name="Simon S."/>
            <person name="Harris B."/>
            <person name="Atkin R."/>
            <person name="Doggett J."/>
            <person name="Mayes R."/>
            <person name="Keating L."/>
            <person name="Wheeler P.R."/>
            <person name="Parkhill J."/>
            <person name="Barrell B.G."/>
            <person name="Cole S.T."/>
            <person name="Gordon S.V."/>
            <person name="Hewinson R.G."/>
        </authorList>
    </citation>
    <scope>NUCLEOTIDE SEQUENCE [LARGE SCALE GENOMIC DNA]</scope>
    <source>
        <strain>ATCC BAA-935 / AF2122/97</strain>
    </source>
</reference>
<reference key="2">
    <citation type="journal article" date="2017" name="Genome Announc.">
        <title>Updated reference genome sequence and annotation of Mycobacterium bovis AF2122/97.</title>
        <authorList>
            <person name="Malone K.M."/>
            <person name="Farrell D."/>
            <person name="Stuber T.P."/>
            <person name="Schubert O.T."/>
            <person name="Aebersold R."/>
            <person name="Robbe-Austerman S."/>
            <person name="Gordon S.V."/>
        </authorList>
    </citation>
    <scope>NUCLEOTIDE SEQUENCE [LARGE SCALE GENOMIC DNA]</scope>
    <scope>GENOME REANNOTATION</scope>
    <source>
        <strain>ATCC BAA-935 / AF2122/97</strain>
    </source>
</reference>
<sequence length="229" mass="23774">MAGSTGGPLIAPSILAADFARLADEAAAVNGADWLHVDVMDGHFVPNLTIGLPVVESLLAVTDIPMDCHLMIDNPDRWAPPYAEAGAYNVTFHAEATDNPVGVARDIRAAGAKAGISVKPGTPLEPYLDILPHFDTLLVMSVEPGFGGQRFIPEVLSKVRAVRKMVDAGELTILVEIDGGINDDTIEQAAEAGVDCFVAGSAVYGADDPAAAVAALRRQAGAASLHLSL</sequence>
<proteinExistence type="inferred from homology"/>
<dbReference type="EC" id="5.1.3.1" evidence="1"/>
<dbReference type="EMBL" id="LT708304">
    <property type="protein sequence ID" value="SIU00046.1"/>
    <property type="status" value="ALT_INIT"/>
    <property type="molecule type" value="Genomic_DNA"/>
</dbReference>
<dbReference type="RefSeq" id="NP_855095.1">
    <property type="nucleotide sequence ID" value="NC_002945.3"/>
</dbReference>
<dbReference type="SMR" id="P65761"/>
<dbReference type="KEGG" id="mbo:BQ2027_MB1443"/>
<dbReference type="PATRIC" id="fig|233413.5.peg.1578"/>
<dbReference type="Proteomes" id="UP000001419">
    <property type="component" value="Chromosome"/>
</dbReference>
<dbReference type="GO" id="GO:0004750">
    <property type="term" value="F:D-ribulose-phosphate 3-epimerase activity"/>
    <property type="evidence" value="ECO:0007669"/>
    <property type="project" value="UniProtKB-UniRule"/>
</dbReference>
<dbReference type="GO" id="GO:0046872">
    <property type="term" value="F:metal ion binding"/>
    <property type="evidence" value="ECO:0007669"/>
    <property type="project" value="UniProtKB-UniRule"/>
</dbReference>
<dbReference type="GO" id="GO:0019323">
    <property type="term" value="P:pentose catabolic process"/>
    <property type="evidence" value="ECO:0007669"/>
    <property type="project" value="UniProtKB-UniRule"/>
</dbReference>
<dbReference type="GO" id="GO:0006098">
    <property type="term" value="P:pentose-phosphate shunt"/>
    <property type="evidence" value="ECO:0007669"/>
    <property type="project" value="InterPro"/>
</dbReference>
<dbReference type="CDD" id="cd00429">
    <property type="entry name" value="RPE"/>
    <property type="match status" value="1"/>
</dbReference>
<dbReference type="FunFam" id="3.20.20.70:FF:000004">
    <property type="entry name" value="Ribulose-phosphate 3-epimerase"/>
    <property type="match status" value="1"/>
</dbReference>
<dbReference type="Gene3D" id="3.20.20.70">
    <property type="entry name" value="Aldolase class I"/>
    <property type="match status" value="1"/>
</dbReference>
<dbReference type="HAMAP" id="MF_02227">
    <property type="entry name" value="RPE"/>
    <property type="match status" value="1"/>
</dbReference>
<dbReference type="InterPro" id="IPR013785">
    <property type="entry name" value="Aldolase_TIM"/>
</dbReference>
<dbReference type="InterPro" id="IPR026019">
    <property type="entry name" value="Ribul_P_3_epim"/>
</dbReference>
<dbReference type="InterPro" id="IPR000056">
    <property type="entry name" value="Ribul_P_3_epim-like"/>
</dbReference>
<dbReference type="InterPro" id="IPR011060">
    <property type="entry name" value="RibuloseP-bd_barrel"/>
</dbReference>
<dbReference type="NCBIfam" id="NF004076">
    <property type="entry name" value="PRK05581.1-4"/>
    <property type="match status" value="1"/>
</dbReference>
<dbReference type="NCBIfam" id="TIGR01163">
    <property type="entry name" value="rpe"/>
    <property type="match status" value="1"/>
</dbReference>
<dbReference type="PANTHER" id="PTHR11749">
    <property type="entry name" value="RIBULOSE-5-PHOSPHATE-3-EPIMERASE"/>
    <property type="match status" value="1"/>
</dbReference>
<dbReference type="Pfam" id="PF00834">
    <property type="entry name" value="Ribul_P_3_epim"/>
    <property type="match status" value="1"/>
</dbReference>
<dbReference type="PIRSF" id="PIRSF001461">
    <property type="entry name" value="RPE"/>
    <property type="match status" value="1"/>
</dbReference>
<dbReference type="SUPFAM" id="SSF51366">
    <property type="entry name" value="Ribulose-phoshate binding barrel"/>
    <property type="match status" value="1"/>
</dbReference>
<dbReference type="PROSITE" id="PS01085">
    <property type="entry name" value="RIBUL_P_3_EPIMER_1"/>
    <property type="match status" value="1"/>
</dbReference>
<dbReference type="PROSITE" id="PS01086">
    <property type="entry name" value="RIBUL_P_3_EPIMER_2"/>
    <property type="match status" value="1"/>
</dbReference>
<keyword id="KW-0119">Carbohydrate metabolism</keyword>
<keyword id="KW-0413">Isomerase</keyword>
<keyword id="KW-0479">Metal-binding</keyword>
<keyword id="KW-1185">Reference proteome</keyword>
<accession>P65761</accession>
<accession>A0A1R3XYN4</accession>
<accession>P71676</accession>
<accession>X2BHU6</accession>
<protein>
    <recommendedName>
        <fullName evidence="1">Ribulose-phosphate 3-epimerase</fullName>
        <ecNumber evidence="1">5.1.3.1</ecNumber>
    </recommendedName>
</protein>
<evidence type="ECO:0000255" key="1">
    <source>
        <dbReference type="HAMAP-Rule" id="MF_02227"/>
    </source>
</evidence>
<evidence type="ECO:0000305" key="2"/>
<comment type="function">
    <text evidence="1">Catalyzes the reversible epimerization of D-ribulose 5-phosphate to D-xylulose 5-phosphate.</text>
</comment>
<comment type="catalytic activity">
    <reaction evidence="1">
        <text>D-ribulose 5-phosphate = D-xylulose 5-phosphate</text>
        <dbReference type="Rhea" id="RHEA:13677"/>
        <dbReference type="ChEBI" id="CHEBI:57737"/>
        <dbReference type="ChEBI" id="CHEBI:58121"/>
        <dbReference type="EC" id="5.1.3.1"/>
    </reaction>
</comment>
<comment type="cofactor">
    <cofactor evidence="1">
        <name>a divalent metal cation</name>
        <dbReference type="ChEBI" id="CHEBI:60240"/>
    </cofactor>
    <text evidence="1">Binds 1 divalent metal cation per subunit.</text>
</comment>
<comment type="pathway">
    <text evidence="1">Carbohydrate degradation.</text>
</comment>
<comment type="similarity">
    <text evidence="1">Belongs to the ribulose-phosphate 3-epimerase family.</text>
</comment>
<comment type="sequence caution" evidence="2">
    <conflict type="erroneous initiation">
        <sequence resource="EMBL-CDS" id="SIU00046"/>
    </conflict>
    <text>Extended N-terminus.</text>
</comment>